<organism>
    <name type="scientific">Homo sapiens</name>
    <name type="common">Human</name>
    <dbReference type="NCBI Taxonomy" id="9606"/>
    <lineage>
        <taxon>Eukaryota</taxon>
        <taxon>Metazoa</taxon>
        <taxon>Chordata</taxon>
        <taxon>Craniata</taxon>
        <taxon>Vertebrata</taxon>
        <taxon>Euteleostomi</taxon>
        <taxon>Mammalia</taxon>
        <taxon>Eutheria</taxon>
        <taxon>Euarchontoglires</taxon>
        <taxon>Primates</taxon>
        <taxon>Haplorrhini</taxon>
        <taxon>Catarrhini</taxon>
        <taxon>Hominidae</taxon>
        <taxon>Homo</taxon>
    </lineage>
</organism>
<keyword id="KW-0002">3D-structure</keyword>
<keyword id="KW-0160">Chromosomal rearrangement</keyword>
<keyword id="KW-0963">Cytoplasm</keyword>
<keyword id="KW-0256">Endoplasmic reticulum</keyword>
<keyword id="KW-0492">Microsome</keyword>
<keyword id="KW-0539">Nucleus</keyword>
<keyword id="KW-1267">Proteomics identification</keyword>
<keyword id="KW-0656">Proto-oncogene</keyword>
<keyword id="KW-1185">Reference proteome</keyword>
<proteinExistence type="evidence at protein level"/>
<sequence length="114" mass="13460">MAECPTLGEAVTDHPDRLWAWEKFVYLDEKQHAWLPLTIEIKDRLQLRVLLRREDVVLGRPMTPTQIGPSLLPIMWQLYPDGRYRSSDSSFWRLVYHIKIDGVEDMLLELLPDD</sequence>
<reference key="1">
    <citation type="journal article" date="1994" name="Proc. Natl. Acad. Sci. U.S.A.">
        <title>Identification of the TCL1 gene involved in T-cell malignancies.</title>
        <authorList>
            <person name="Virgilio L."/>
            <person name="Narducci M.G."/>
            <person name="Isobe M."/>
            <person name="Billips L.G."/>
            <person name="Cooper M.D."/>
            <person name="Croce C.M."/>
            <person name="Russo G."/>
        </authorList>
    </citation>
    <scope>NUCLEOTIDE SEQUENCE [MRNA]</scope>
</reference>
<reference key="2">
    <citation type="submission" date="2004-06" db="EMBL/GenBank/DDBJ databases">
        <title>Cloning of human full open reading frames in Gateway(TM) system entry vector (pDONR201).</title>
        <authorList>
            <person name="Ebert L."/>
            <person name="Schick M."/>
            <person name="Neubert P."/>
            <person name="Schatten R."/>
            <person name="Henze S."/>
            <person name="Korn B."/>
        </authorList>
    </citation>
    <scope>NUCLEOTIDE SEQUENCE [LARGE SCALE MRNA]</scope>
</reference>
<reference key="3">
    <citation type="journal article" date="2004" name="Genome Res.">
        <title>The status, quality, and expansion of the NIH full-length cDNA project: the Mammalian Gene Collection (MGC).</title>
        <authorList>
            <consortium name="The MGC Project Team"/>
        </authorList>
    </citation>
    <scope>NUCLEOTIDE SEQUENCE [LARGE SCALE MRNA]</scope>
    <source>
        <tissue>B-cell</tissue>
        <tissue>Lymph</tissue>
    </source>
</reference>
<reference key="4">
    <citation type="journal article" date="1994" name="Cancer Res.">
        <title>Characterization and localization of the TCL-1 oncogene product.</title>
        <authorList>
            <person name="Fu T.-B."/>
            <person name="Virgilio L."/>
            <person name="Narducci M.G."/>
            <person name="Facchiano A."/>
            <person name="Russo G."/>
            <person name="Croce C.M."/>
        </authorList>
    </citation>
    <scope>CHARACTERIZATION</scope>
    <scope>SUBCELLULAR LOCATION</scope>
</reference>
<reference key="5">
    <citation type="journal article" date="2000" name="Mol. Cell">
        <title>The protooncogene TCL1 is an Akt kinase coactivator.</title>
        <authorList>
            <person name="Laine J."/>
            <person name="Kuenstle G."/>
            <person name="Obata T."/>
            <person name="Sha M."/>
            <person name="Noguchi M."/>
        </authorList>
    </citation>
    <scope>FUNCTION</scope>
    <scope>INTERACTION WITH AKT1 AND AKT2</scope>
</reference>
<reference key="6">
    <citation type="journal article" date="2000" name="Proc. Natl. Acad. Sci. U.S.A.">
        <title>Tcl1 enhances Akt kinase activity and mediates its nuclear translocation.</title>
        <authorList>
            <person name="Pekarsky Y."/>
            <person name="Koval A."/>
            <person name="Hallas C."/>
            <person name="Bichi R."/>
            <person name="Tresini M."/>
            <person name="Malstrom S."/>
            <person name="Russo G."/>
            <person name="Tsichlis P."/>
            <person name="Croce C.M."/>
        </authorList>
    </citation>
    <scope>FUNCTION</scope>
    <scope>INTERACTION WITH AKT1</scope>
</reference>
<reference key="7">
    <citation type="journal article" date="2002" name="J. Biol. Chem.">
        <title>Differential regulation of Akt kinase isoforms by the members of the TCL1 oncogene family.</title>
        <authorList>
            <person name="Laine J."/>
            <person name="Kuenstle G."/>
            <person name="Obata T."/>
            <person name="Noguchi M."/>
        </authorList>
    </citation>
    <scope>FUNCTION</scope>
    <scope>INTERACTION WITH AKT3</scope>
</reference>
<reference key="8">
    <citation type="journal article" date="2002" name="Mol. Cell. Biol.">
        <title>Identification of Akt association and oligomerization domains of the Akt kinase coactivator TCL1.</title>
        <authorList>
            <person name="Kuenstle G."/>
            <person name="Laine J."/>
            <person name="Pierron G."/>
            <person name="Kagami S."/>
            <person name="Nakajima H."/>
            <person name="Hoh F."/>
            <person name="Roumestand C."/>
            <person name="Stern M.H."/>
            <person name="Noguchi M."/>
        </authorList>
    </citation>
    <scope>FUNCTION</scope>
    <scope>INTERACTION WITH AKT1; AKT2 AND AKT3</scope>
    <scope>MUTAGENESIS OF ASP-16; LYS-30; 36-PRO--THR-38; GLN-46; ILE-74 AND MET-106</scope>
</reference>
<reference key="9">
    <citation type="journal article" date="2007" name="Cancer Lett.">
        <title>The TCL1 oncoprotein binds the RNase PH domains of the PNPase exoribonuclease without affecting its RNA degrading activity.</title>
        <authorList>
            <person name="French S.W."/>
            <person name="Dawson D.W."/>
            <person name="Chen H.-W."/>
            <person name="Rainey R.N."/>
            <person name="Sievers S.A."/>
            <person name="Balatoni C.E."/>
            <person name="Wong L."/>
            <person name="Troke J.J."/>
            <person name="Nguyen M.T.N."/>
            <person name="Koehler C.M."/>
            <person name="Teitell M.A."/>
        </authorList>
    </citation>
    <scope>INTERACTION WITH PNPT1</scope>
</reference>
<reference key="10">
    <citation type="journal article" date="1998" name="Structure">
        <title>Crystal structure of p14TCL1, an oncogene product involved in T-cell prolymphocytic leukemia, reveals a novel beta-barrel topology.</title>
        <authorList>
            <person name="Hoh F."/>
            <person name="Yang Y.-S."/>
            <person name="Guignard L."/>
            <person name="Padilla A."/>
            <person name="Stern M.-H."/>
            <person name="Lhoste J.-M."/>
            <person name="van Tilbourgh H."/>
        </authorList>
    </citation>
    <scope>X-RAY CRYSTALLOGRAPHY (2.5 ANGSTROMS)</scope>
</reference>
<dbReference type="EMBL" id="X82240">
    <property type="protein sequence ID" value="CAA57708.1"/>
    <property type="molecule type" value="mRNA"/>
</dbReference>
<dbReference type="EMBL" id="CR456796">
    <property type="protein sequence ID" value="CAG33077.1"/>
    <property type="molecule type" value="mRNA"/>
</dbReference>
<dbReference type="EMBL" id="BC003574">
    <property type="protein sequence ID" value="AAH03574.1"/>
    <property type="molecule type" value="mRNA"/>
</dbReference>
<dbReference type="EMBL" id="BC005831">
    <property type="protein sequence ID" value="AAH05831.1"/>
    <property type="molecule type" value="mRNA"/>
</dbReference>
<dbReference type="EMBL" id="BC014024">
    <property type="protein sequence ID" value="AAH14024.1"/>
    <property type="molecule type" value="mRNA"/>
</dbReference>
<dbReference type="CCDS" id="CCDS9941.1"/>
<dbReference type="PIR" id="I38286">
    <property type="entry name" value="I38286"/>
</dbReference>
<dbReference type="RefSeq" id="NP_001092195.1">
    <property type="nucleotide sequence ID" value="NM_001098725.2"/>
</dbReference>
<dbReference type="RefSeq" id="NP_068801.1">
    <property type="nucleotide sequence ID" value="NM_021966.3"/>
</dbReference>
<dbReference type="RefSeq" id="XP_016877165.1">
    <property type="nucleotide sequence ID" value="XM_017021676.1"/>
</dbReference>
<dbReference type="RefSeq" id="XP_016877166.1">
    <property type="nucleotide sequence ID" value="XM_017021677.1"/>
</dbReference>
<dbReference type="PDB" id="1JSG">
    <property type="method" value="X-ray"/>
    <property type="resolution" value="2.50 A"/>
    <property type="chains" value="A=1-114"/>
</dbReference>
<dbReference type="PDBsum" id="1JSG"/>
<dbReference type="SMR" id="P56279"/>
<dbReference type="BioGRID" id="113783">
    <property type="interactions" value="64"/>
</dbReference>
<dbReference type="CORUM" id="P56279"/>
<dbReference type="DIP" id="DIP-60787N"/>
<dbReference type="FunCoup" id="P56279">
    <property type="interactions" value="362"/>
</dbReference>
<dbReference type="IntAct" id="P56279">
    <property type="interactions" value="57"/>
</dbReference>
<dbReference type="MINT" id="P56279"/>
<dbReference type="STRING" id="9606.ENSP00000451506"/>
<dbReference type="iPTMnet" id="P56279"/>
<dbReference type="PhosphoSitePlus" id="P56279"/>
<dbReference type="BioMuta" id="TCL1A"/>
<dbReference type="MassIVE" id="P56279"/>
<dbReference type="PaxDb" id="9606-ENSP00000385036"/>
<dbReference type="PeptideAtlas" id="P56279"/>
<dbReference type="ProteomicsDB" id="56910"/>
<dbReference type="Antibodypedia" id="65">
    <property type="antibodies" value="445 antibodies from 39 providers"/>
</dbReference>
<dbReference type="DNASU" id="8115"/>
<dbReference type="Ensembl" id="ENST00000402399.6">
    <property type="protein sequence ID" value="ENSP00000385036.1"/>
    <property type="gene ID" value="ENSG00000100721.11"/>
</dbReference>
<dbReference type="Ensembl" id="ENST00000554012.5">
    <property type="protein sequence ID" value="ENSP00000451506.1"/>
    <property type="gene ID" value="ENSG00000100721.11"/>
</dbReference>
<dbReference type="Ensembl" id="ENST00000555202.1">
    <property type="protein sequence ID" value="ENSP00000450496.1"/>
    <property type="gene ID" value="ENSG00000100721.11"/>
</dbReference>
<dbReference type="Ensembl" id="ENST00000556450.5">
    <property type="protein sequence ID" value="ENSP00000450701.1"/>
    <property type="gene ID" value="ENSG00000100721.11"/>
</dbReference>
<dbReference type="GeneID" id="8115"/>
<dbReference type="KEGG" id="hsa:8115"/>
<dbReference type="MANE-Select" id="ENST00000402399.6">
    <property type="protein sequence ID" value="ENSP00000385036.1"/>
    <property type="RefSeq nucleotide sequence ID" value="NM_021966.3"/>
    <property type="RefSeq protein sequence ID" value="NP_068801.1"/>
</dbReference>
<dbReference type="UCSC" id="uc001yfb.5">
    <property type="organism name" value="human"/>
</dbReference>
<dbReference type="AGR" id="HGNC:11648"/>
<dbReference type="CTD" id="8115"/>
<dbReference type="DisGeNET" id="8115"/>
<dbReference type="GeneCards" id="TCL1A"/>
<dbReference type="HGNC" id="HGNC:11648">
    <property type="gene designation" value="TCL1A"/>
</dbReference>
<dbReference type="HPA" id="ENSG00000100721">
    <property type="expression patterns" value="Tissue enriched (lymphoid)"/>
</dbReference>
<dbReference type="MalaCards" id="TCL1A"/>
<dbReference type="MIM" id="186960">
    <property type="type" value="gene"/>
</dbReference>
<dbReference type="neXtProt" id="NX_P56279"/>
<dbReference type="OpenTargets" id="ENSG00000100721"/>
<dbReference type="Orphanet" id="99861">
    <property type="disease" value="Precursor T-cell acute lymphoblastic leukemia"/>
</dbReference>
<dbReference type="PharmGKB" id="PA36400"/>
<dbReference type="VEuPathDB" id="HostDB:ENSG00000100721"/>
<dbReference type="eggNOG" id="ENOG502TDVJ">
    <property type="taxonomic scope" value="Eukaryota"/>
</dbReference>
<dbReference type="GeneTree" id="ENSGT00390000006885"/>
<dbReference type="HOGENOM" id="CLU_168379_0_1_1"/>
<dbReference type="InParanoid" id="P56279"/>
<dbReference type="OMA" id="LYHIKFR"/>
<dbReference type="OrthoDB" id="9834674at2759"/>
<dbReference type="PAN-GO" id="P56279">
    <property type="GO annotations" value="2 GO annotations based on evolutionary models"/>
</dbReference>
<dbReference type="PhylomeDB" id="P56279"/>
<dbReference type="TreeFam" id="TF337903"/>
<dbReference type="PathwayCommons" id="P56279"/>
<dbReference type="SignaLink" id="P56279"/>
<dbReference type="SIGNOR" id="P56279"/>
<dbReference type="BioGRID-ORCS" id="8115">
    <property type="hits" value="10 hits in 1147 CRISPR screens"/>
</dbReference>
<dbReference type="ChiTaRS" id="TCL1A">
    <property type="organism name" value="human"/>
</dbReference>
<dbReference type="EvolutionaryTrace" id="P56279"/>
<dbReference type="GeneWiki" id="TCL1A"/>
<dbReference type="GenomeRNAi" id="8115"/>
<dbReference type="Pharos" id="P56279">
    <property type="development level" value="Tbio"/>
</dbReference>
<dbReference type="PRO" id="PR:P56279"/>
<dbReference type="Proteomes" id="UP000005640">
    <property type="component" value="Chromosome 14"/>
</dbReference>
<dbReference type="RNAct" id="P56279">
    <property type="molecule type" value="protein"/>
</dbReference>
<dbReference type="Bgee" id="ENSG00000100721">
    <property type="expression patterns" value="Expressed in oocyte and 125 other cell types or tissues"/>
</dbReference>
<dbReference type="ExpressionAtlas" id="P56279">
    <property type="expression patterns" value="baseline and differential"/>
</dbReference>
<dbReference type="GO" id="GO:0005829">
    <property type="term" value="C:cytosol"/>
    <property type="evidence" value="ECO:0000314"/>
    <property type="project" value="HPA"/>
</dbReference>
<dbReference type="GO" id="GO:0005783">
    <property type="term" value="C:endoplasmic reticulum"/>
    <property type="evidence" value="ECO:0000314"/>
    <property type="project" value="HPA"/>
</dbReference>
<dbReference type="GO" id="GO:0005654">
    <property type="term" value="C:nucleoplasm"/>
    <property type="evidence" value="ECO:0000314"/>
    <property type="project" value="HPA"/>
</dbReference>
<dbReference type="GO" id="GO:0005634">
    <property type="term" value="C:nucleus"/>
    <property type="evidence" value="ECO:0000318"/>
    <property type="project" value="GO_Central"/>
</dbReference>
<dbReference type="GO" id="GO:0042802">
    <property type="term" value="F:identical protein binding"/>
    <property type="evidence" value="ECO:0000314"/>
    <property type="project" value="UniProtKB"/>
</dbReference>
<dbReference type="GO" id="GO:0019901">
    <property type="term" value="F:protein kinase binding"/>
    <property type="evidence" value="ECO:0000353"/>
    <property type="project" value="UniProtKB"/>
</dbReference>
<dbReference type="GO" id="GO:0043539">
    <property type="term" value="F:protein serine/threonine kinase activator activity"/>
    <property type="evidence" value="ECO:0000314"/>
    <property type="project" value="UniProtKB"/>
</dbReference>
<dbReference type="GO" id="GO:0035556">
    <property type="term" value="P:intracellular signal transduction"/>
    <property type="evidence" value="ECO:0000314"/>
    <property type="project" value="UniProtKB"/>
</dbReference>
<dbReference type="FunFam" id="2.40.15.10:FF:000002">
    <property type="entry name" value="T-cell leukemia/lymphoma protein 1A"/>
    <property type="match status" value="1"/>
</dbReference>
<dbReference type="Gene3D" id="2.40.15.10">
    <property type="entry name" value="TCL1/MTCP1"/>
    <property type="match status" value="1"/>
</dbReference>
<dbReference type="InterPro" id="IPR004832">
    <property type="entry name" value="TCL1_MTCP1"/>
</dbReference>
<dbReference type="InterPro" id="IPR036672">
    <property type="entry name" value="TCL1_MTCP1_sf"/>
</dbReference>
<dbReference type="PANTHER" id="PTHR14060">
    <property type="entry name" value="PROTEIN P13 MTCP-1"/>
    <property type="match status" value="1"/>
</dbReference>
<dbReference type="PANTHER" id="PTHR14060:SF4">
    <property type="entry name" value="T-CELL LEUKEMIA_LYMPHOMA PROTEIN 1A"/>
    <property type="match status" value="1"/>
</dbReference>
<dbReference type="Pfam" id="PF01840">
    <property type="entry name" value="TCL1_MTCP1"/>
    <property type="match status" value="1"/>
</dbReference>
<dbReference type="SUPFAM" id="SSF50904">
    <property type="entry name" value="Oncogene products"/>
    <property type="match status" value="1"/>
</dbReference>
<comment type="function">
    <text evidence="2 3 4 5">Enhances the phosphorylation and activation of AKT1, AKT2 and AKT3. Promotes nuclear translocation of AKT1. Enhances cell proliferation, stabilizes mitochondrial membrane potential and promotes cell survival.</text>
</comment>
<comment type="subunit">
    <text evidence="2 3 4 5 6">Homodimer. Interacts with AKT1, AKT2 and AKT3 (via PH domain). Interacts with PNPT1; the interaction has no effect on PNPT1 exonuclease activity.</text>
</comment>
<comment type="interaction">
    <interactant intactId="EBI-749995">
        <id>P56279</id>
    </interactant>
    <interactant intactId="EBI-16430470">
        <id>A0A0S2Z3D6</id>
        <label>AKT1</label>
    </interactant>
    <organismsDiffer>false</organismsDiffer>
    <experiments>3</experiments>
</comment>
<comment type="interaction">
    <interactant intactId="EBI-749995">
        <id>P56279</id>
    </interactant>
    <interactant intactId="EBI-10175397">
        <id>B0LPE5</id>
        <label>AKT1</label>
    </interactant>
    <organismsDiffer>false</organismsDiffer>
    <experiments>3</experiments>
</comment>
<comment type="interaction">
    <interactant intactId="EBI-749995">
        <id>P56279</id>
    </interactant>
    <interactant intactId="EBI-296087">
        <id>P31749</id>
        <label>AKT1</label>
    </interactant>
    <organismsDiffer>false</organismsDiffer>
    <experiments>8</experiments>
</comment>
<comment type="interaction">
    <interactant intactId="EBI-749995">
        <id>P56279</id>
    </interactant>
    <interactant intactId="EBI-10179719">
        <id>A2RRN7</id>
        <label>CADPS</label>
    </interactant>
    <organismsDiffer>false</organismsDiffer>
    <experiments>6</experiments>
</comment>
<comment type="interaction">
    <interactant intactId="EBI-749995">
        <id>P56279</id>
    </interactant>
    <interactant intactId="EBI-739580">
        <id>Q13137</id>
        <label>CALCOCO2</label>
    </interactant>
    <organismsDiffer>false</organismsDiffer>
    <experiments>12</experiments>
</comment>
<comment type="interaction">
    <interactant intactId="EBI-749995">
        <id>P56279</id>
    </interactant>
    <interactant intactId="EBI-751319">
        <id>Q9H257</id>
        <label>CARD9</label>
    </interactant>
    <organismsDiffer>false</organismsDiffer>
    <experiments>3</experiments>
</comment>
<comment type="interaction">
    <interactant intactId="EBI-749995">
        <id>P56279</id>
    </interactant>
    <interactant intactId="EBI-11530605">
        <id>Q9H257-2</id>
        <label>CARD9</label>
    </interactant>
    <organismsDiffer>false</organismsDiffer>
    <experiments>3</experiments>
</comment>
<comment type="interaction">
    <interactant intactId="EBI-749995">
        <id>P56279</id>
    </interactant>
    <interactant intactId="EBI-23281255">
        <id>A0AAG2UWT9</id>
        <label>CASP8AP2</label>
    </interactant>
    <organismsDiffer>false</organismsDiffer>
    <experiments>3</experiments>
</comment>
<comment type="interaction">
    <interactant intactId="EBI-749995">
        <id>P56279</id>
    </interactant>
    <interactant intactId="EBI-10961312">
        <id>Q8IYE1</id>
        <label>CCDC13</label>
    </interactant>
    <organismsDiffer>false</organismsDiffer>
    <experiments>3</experiments>
</comment>
<comment type="interaction">
    <interactant intactId="EBI-749995">
        <id>P56279</id>
    </interactant>
    <interactant intactId="EBI-747776">
        <id>Q53EZ4</id>
        <label>CEP55</label>
    </interactant>
    <organismsDiffer>false</organismsDiffer>
    <experiments>6</experiments>
</comment>
<comment type="interaction">
    <interactant intactId="EBI-749995">
        <id>P56279</id>
    </interactant>
    <interactant intactId="EBI-742054">
        <id>Q96D03</id>
        <label>DDIT4L</label>
    </interactant>
    <organismsDiffer>false</organismsDiffer>
    <experiments>3</experiments>
</comment>
<comment type="interaction">
    <interactant intactId="EBI-749995">
        <id>P56279</id>
    </interactant>
    <interactant intactId="EBI-923653">
        <id>Q9Y6K1</id>
        <label>DNMT3A</label>
    </interactant>
    <organismsDiffer>false</organismsDiffer>
    <experiments>13</experiments>
</comment>
<comment type="interaction">
    <interactant intactId="EBI-749995">
        <id>P56279</id>
    </interactant>
    <interactant intactId="EBI-447295">
        <id>Q09472</id>
        <label>EP300</label>
    </interactant>
    <organismsDiffer>false</organismsDiffer>
    <experiments>4</experiments>
</comment>
<comment type="interaction">
    <interactant intactId="EBI-749995">
        <id>P56279</id>
    </interactant>
    <interactant intactId="EBI-750451">
        <id>Q96Q35</id>
        <label>FLACC1</label>
    </interactant>
    <organismsDiffer>false</organismsDiffer>
    <experiments>3</experiments>
</comment>
<comment type="interaction">
    <interactant intactId="EBI-749995">
        <id>P56279</id>
    </interactant>
    <interactant intactId="EBI-852851">
        <id>P01100</id>
        <label>FOS</label>
    </interactant>
    <organismsDiffer>false</organismsDiffer>
    <experiments>4</experiments>
</comment>
<comment type="interaction">
    <interactant intactId="EBI-749995">
        <id>P56279</id>
    </interactant>
    <interactant intactId="EBI-618309">
        <id>Q08379</id>
        <label>GOLGA2</label>
    </interactant>
    <organismsDiffer>false</organismsDiffer>
    <experiments>8</experiments>
</comment>
<comment type="interaction">
    <interactant intactId="EBI-749995">
        <id>P56279</id>
    </interactant>
    <interactant intactId="EBI-6509505">
        <id>Q0VD86</id>
        <label>INCA1</label>
    </interactant>
    <organismsDiffer>false</organismsDiffer>
    <experiments>3</experiments>
</comment>
<comment type="interaction">
    <interactant intactId="EBI-749995">
        <id>P56279</id>
    </interactant>
    <interactant intactId="EBI-852823">
        <id>P05412</id>
        <label>JUN</label>
    </interactant>
    <organismsDiffer>false</organismsDiffer>
    <experiments>6</experiments>
</comment>
<comment type="interaction">
    <interactant intactId="EBI-749995">
        <id>P56279</id>
    </interactant>
    <interactant intactId="EBI-748062">
        <id>P17275</id>
        <label>JUNB</label>
    </interactant>
    <organismsDiffer>false</organismsDiffer>
    <experiments>2</experiments>
</comment>
<comment type="interaction">
    <interactant intactId="EBI-749995">
        <id>P56279</id>
    </interactant>
    <interactant intactId="EBI-739832">
        <id>Q8TBB1</id>
        <label>LNX1</label>
    </interactant>
    <organismsDiffer>false</organismsDiffer>
    <experiments>3</experiments>
</comment>
<comment type="interaction">
    <interactant intactId="EBI-749995">
        <id>P56279</id>
    </interactant>
    <interactant intactId="EBI-348239">
        <id>P62310</id>
        <label>LSM3</label>
    </interactant>
    <organismsDiffer>false</organismsDiffer>
    <experiments>6</experiments>
</comment>
<comment type="interaction">
    <interactant intactId="EBI-749995">
        <id>P56279</id>
    </interactant>
    <interactant intactId="EBI-307386">
        <id>P25963</id>
        <label>NFKBIA</label>
    </interactant>
    <organismsDiffer>false</organismsDiffer>
    <experiments>3</experiments>
</comment>
<comment type="interaction">
    <interactant intactId="EBI-749995">
        <id>P56279</id>
    </interactant>
    <interactant intactId="EBI-10271199">
        <id>Q8NI38</id>
        <label>NFKBID</label>
    </interactant>
    <organismsDiffer>false</organismsDiffer>
    <experiments>3</experiments>
</comment>
<comment type="interaction">
    <interactant intactId="EBI-749995">
        <id>P56279</id>
    </interactant>
    <interactant intactId="EBI-740897">
        <id>Q9GZT8</id>
        <label>NIF3L1</label>
    </interactant>
    <organismsDiffer>false</organismsDiffer>
    <experiments>5</experiments>
</comment>
<comment type="interaction">
    <interactant intactId="EBI-749995">
        <id>P56279</id>
    </interactant>
    <interactant intactId="EBI-741158">
        <id>Q96HA8</id>
        <label>NTAQ1</label>
    </interactant>
    <organismsDiffer>false</organismsDiffer>
    <experiments>5</experiments>
</comment>
<comment type="interaction">
    <interactant intactId="EBI-749995">
        <id>P56279</id>
    </interactant>
    <interactant intactId="EBI-1105153">
        <id>Q96KQ4</id>
        <label>PPP1R13B</label>
    </interactant>
    <organismsDiffer>false</organismsDiffer>
    <experiments>3</experiments>
</comment>
<comment type="interaction">
    <interactant intactId="EBI-749995">
        <id>P56279</id>
    </interactant>
    <interactant intactId="EBI-739759">
        <id>Q9NRG1</id>
        <label>PRTFDC1</label>
    </interactant>
    <organismsDiffer>false</organismsDiffer>
    <experiments>6</experiments>
</comment>
<comment type="interaction">
    <interactant intactId="EBI-749995">
        <id>P56279</id>
    </interactant>
    <interactant intactId="EBI-10829018">
        <id>Q04864-2</id>
        <label>REL</label>
    </interactant>
    <organismsDiffer>false</organismsDiffer>
    <experiments>3</experiments>
</comment>
<comment type="interaction">
    <interactant intactId="EBI-749995">
        <id>P56279</id>
    </interactant>
    <interactant intactId="EBI-529518">
        <id>Q86VP1</id>
        <label>TAX1BP1</label>
    </interactant>
    <organismsDiffer>false</organismsDiffer>
    <experiments>3</experiments>
</comment>
<comment type="interaction">
    <interactant intactId="EBI-749995">
        <id>P56279</id>
    </interactant>
    <interactant intactId="EBI-533224">
        <id>P15884</id>
        <label>TCF4</label>
    </interactant>
    <organismsDiffer>false</organismsDiffer>
    <experiments>3</experiments>
</comment>
<comment type="interaction">
    <interactant intactId="EBI-749995">
        <id>P56279</id>
    </interactant>
    <interactant intactId="EBI-749995">
        <id>P56279</id>
        <label>TCL1A</label>
    </interactant>
    <organismsDiffer>false</organismsDiffer>
    <experiments>4</experiments>
</comment>
<comment type="interaction">
    <interactant intactId="EBI-749995">
        <id>P56279</id>
    </interactant>
    <interactant intactId="EBI-11139477">
        <id>Q96N21</id>
        <label>TEPSIN</label>
    </interactant>
    <organismsDiffer>false</organismsDiffer>
    <experiments>3</experiments>
</comment>
<comment type="interaction">
    <interactant intactId="EBI-749995">
        <id>P56279</id>
    </interactant>
    <interactant intactId="EBI-1105254">
        <id>O95271</id>
        <label>TNKS</label>
    </interactant>
    <organismsDiffer>false</organismsDiffer>
    <experiments>3</experiments>
</comment>
<comment type="interaction">
    <interactant intactId="EBI-749995">
        <id>P56279</id>
    </interactant>
    <interactant intactId="EBI-10175039">
        <id>Q13625-3</id>
        <label>TP53BP2</label>
    </interactant>
    <organismsDiffer>false</organismsDiffer>
    <experiments>3</experiments>
</comment>
<comment type="interaction">
    <interactant intactId="EBI-749995">
        <id>P56279</id>
    </interactant>
    <interactant intactId="EBI-359224">
        <id>Q13077</id>
        <label>TRAF1</label>
    </interactant>
    <organismsDiffer>false</organismsDiffer>
    <experiments>8</experiments>
</comment>
<comment type="interaction">
    <interactant intactId="EBI-749995">
        <id>P56279</id>
    </interactant>
    <interactant intactId="EBI-355744">
        <id>Q12933</id>
        <label>TRAF2</label>
    </interactant>
    <organismsDiffer>false</organismsDiffer>
    <experiments>3</experiments>
</comment>
<comment type="interaction">
    <interactant intactId="EBI-749995">
        <id>P56279</id>
    </interactant>
    <interactant intactId="EBI-934042">
        <id>Q96FX7</id>
        <label>TRMT61A</label>
    </interactant>
    <organismsDiffer>false</organismsDiffer>
    <experiments>3</experiments>
</comment>
<comment type="interaction">
    <interactant intactId="EBI-749995">
        <id>P56279</id>
    </interactant>
    <interactant intactId="EBI-2555404">
        <id>Q6PID6</id>
        <label>TTC33</label>
    </interactant>
    <organismsDiffer>false</organismsDiffer>
    <experiments>7</experiments>
</comment>
<comment type="interaction">
    <interactant intactId="EBI-749995">
        <id>P56279</id>
    </interactant>
    <interactant intactId="EBI-359793">
        <id>P40222</id>
        <label>TXLNA</label>
    </interactant>
    <organismsDiffer>false</organismsDiffer>
    <experiments>8</experiments>
</comment>
<comment type="interaction">
    <interactant intactId="EBI-749995">
        <id>P56279</id>
    </interactant>
    <interactant intactId="EBI-6116822">
        <id>Q8N3L3</id>
        <label>TXLNB</label>
    </interactant>
    <organismsDiffer>false</organismsDiffer>
    <experiments>3</experiments>
</comment>
<comment type="interaction">
    <interactant intactId="EBI-749995">
        <id>P56279</id>
    </interactant>
    <interactant intactId="EBI-723239">
        <id>O94967</id>
        <label>WDR47</label>
    </interactant>
    <organismsDiffer>false</organismsDiffer>
    <experiments>3</experiments>
</comment>
<comment type="subcellular location">
    <subcellularLocation>
        <location evidence="1">Cytoplasm</location>
    </subcellularLocation>
    <subcellularLocation>
        <location evidence="1">Nucleus</location>
    </subcellularLocation>
    <subcellularLocation>
        <location evidence="7">Microsome</location>
    </subcellularLocation>
    <subcellularLocation>
        <location evidence="7">Endoplasmic reticulum</location>
    </subcellularLocation>
    <text>Microsomal fraction.</text>
</comment>
<comment type="tissue specificity">
    <text>Restricted in the T-cell lineage to immature thymocytes and activated peripheral lymphocytes. Preferentially expressed early in T- and B-lymphocyte differentiation.</text>
</comment>
<comment type="disease">
    <text>Chromosomal aberrations activating TCL1A are found in chronic T-cell leukemias (T-CLL). Translocation t(14;14)(q11;q32); translocation t(7;14)(q35;q32); inversion inv(14)(q11;q32) that involves the T-cell receptor alpha/delta loci.</text>
</comment>
<comment type="similarity">
    <text evidence="8">Belongs to the TCL1 family.</text>
</comment>
<comment type="online information" name="Atlas of Genetics and Cytogenetics in Oncology and Haematology">
    <link uri="https://atlasgeneticsoncology.org/gene/66/TCL1"/>
</comment>
<name>TCL1A_HUMAN</name>
<protein>
    <recommendedName>
        <fullName>T-cell leukemia/lymphoma protein 1A</fullName>
    </recommendedName>
    <alternativeName>
        <fullName>Oncogene TCL-1</fullName>
        <shortName>Oncogene TCL1</shortName>
    </alternativeName>
    <alternativeName>
        <fullName>Protein p14 TCL1</fullName>
    </alternativeName>
</protein>
<accession>P56279</accession>
<accession>Q6IBK7</accession>
<evidence type="ECO:0000250" key="1"/>
<evidence type="ECO:0000269" key="2">
    <source>
    </source>
</evidence>
<evidence type="ECO:0000269" key="3">
    <source>
    </source>
</evidence>
<evidence type="ECO:0000269" key="4">
    <source>
    </source>
</evidence>
<evidence type="ECO:0000269" key="5">
    <source>
    </source>
</evidence>
<evidence type="ECO:0000269" key="6">
    <source>
    </source>
</evidence>
<evidence type="ECO:0000269" key="7">
    <source>
    </source>
</evidence>
<evidence type="ECO:0000305" key="8"/>
<evidence type="ECO:0007829" key="9">
    <source>
        <dbReference type="PDB" id="1JSG"/>
    </source>
</evidence>
<gene>
    <name type="primary">TCL1A</name>
    <name type="synonym">TCL1</name>
</gene>
<feature type="chain" id="PRO_0000184488" description="T-cell leukemia/lymphoma protein 1A">
    <location>
        <begin position="1"/>
        <end position="114"/>
    </location>
</feature>
<feature type="sequence variant" id="VAR_053718" description="In dbSNP:rs17093294.">
    <original>V</original>
    <variation>I</variation>
    <location>
        <position position="56"/>
    </location>
</feature>
<feature type="mutagenesis site" description="Greatly reduced binding to AKT1, AKT2 and AKT3. Abolishes nuclear transport of AKT1." evidence="5">
    <original>D</original>
    <variation>G</variation>
    <location>
        <position position="16"/>
    </location>
</feature>
<feature type="mutagenesis site" description="Slightly reduced binding to AKT2." evidence="5">
    <original>K</original>
    <variation>M</variation>
    <location>
        <position position="30"/>
    </location>
</feature>
<feature type="mutagenesis site" description="Unable to homodimerize but has no effect on interaction with AKT1, AKT2 or AKT3." evidence="5">
    <original>PLT</original>
    <variation>AAA</variation>
    <location>
        <begin position="36"/>
        <end position="38"/>
    </location>
</feature>
<feature type="mutagenesis site" description="Slightly increased binding to AKT2." evidence="5">
    <original>Q</original>
    <variation>R</variation>
    <location>
        <position position="46"/>
    </location>
</feature>
<feature type="mutagenesis site" description="Greatly reduced binding to AKT2. Abolishes nuclear transport of AKT1." evidence="5">
    <original>I</original>
    <variation>V</variation>
    <location>
        <position position="74"/>
    </location>
</feature>
<feature type="mutagenesis site" description="Slightly increased binding to AKT2." evidence="5">
    <original>M</original>
    <variation>V</variation>
    <location>
        <position position="106"/>
    </location>
</feature>
<feature type="sequence conflict" description="In Ref. 2; CAG33077." evidence="8" ref="2">
    <original>M</original>
    <variation>V</variation>
    <location>
        <position position="106"/>
    </location>
</feature>
<feature type="strand" evidence="9">
    <location>
        <begin position="8"/>
        <end position="10"/>
    </location>
</feature>
<feature type="strand" evidence="9">
    <location>
        <begin position="16"/>
        <end position="22"/>
    </location>
</feature>
<feature type="strand" evidence="9">
    <location>
        <begin position="25"/>
        <end position="28"/>
    </location>
</feature>
<feature type="strand" evidence="9">
    <location>
        <begin position="33"/>
        <end position="42"/>
    </location>
</feature>
<feature type="turn" evidence="9">
    <location>
        <begin position="43"/>
        <end position="45"/>
    </location>
</feature>
<feature type="strand" evidence="9">
    <location>
        <begin position="46"/>
        <end position="53"/>
    </location>
</feature>
<feature type="helix" evidence="9">
    <location>
        <begin position="64"/>
        <end position="67"/>
    </location>
</feature>
<feature type="strand" evidence="9">
    <location>
        <begin position="74"/>
        <end position="78"/>
    </location>
</feature>
<feature type="strand" evidence="9">
    <location>
        <begin position="84"/>
        <end position="86"/>
    </location>
</feature>
<feature type="strand" evidence="9">
    <location>
        <begin position="91"/>
        <end position="100"/>
    </location>
</feature>
<feature type="strand" evidence="9">
    <location>
        <begin position="103"/>
        <end position="111"/>
    </location>
</feature>